<evidence type="ECO:0000255" key="1"/>
<evidence type="ECO:0000269" key="2">
    <source>
    </source>
</evidence>
<evidence type="ECO:0000305" key="3"/>
<protein>
    <recommendedName>
        <fullName>Transcriptional regulator Brz</fullName>
    </recommendedName>
    <alternativeName>
        <fullName>Bacteriorhodopsin-regulating zinc finger protein</fullName>
    </alternativeName>
</protein>
<organism>
    <name type="scientific">Halobacterium salinarum (strain ATCC 29341 / DSM 671 / R1)</name>
    <dbReference type="NCBI Taxonomy" id="478009"/>
    <lineage>
        <taxon>Archaea</taxon>
        <taxon>Methanobacteriati</taxon>
        <taxon>Methanobacteriota</taxon>
        <taxon>Stenosarchaea group</taxon>
        <taxon>Halobacteria</taxon>
        <taxon>Halobacteriales</taxon>
        <taxon>Halobacteriaceae</taxon>
        <taxon>Halobacterium</taxon>
        <taxon>Halobacterium salinarum NRC-34001</taxon>
    </lineage>
</organism>
<proteinExistence type="evidence at protein level"/>
<dbReference type="EMBL" id="AM774415">
    <property type="protein sequence ID" value="CAP14055.1"/>
    <property type="molecule type" value="Genomic_DNA"/>
</dbReference>
<dbReference type="RefSeq" id="WP_012289336.1">
    <property type="nucleotide sequence ID" value="NC_010364.1"/>
</dbReference>
<dbReference type="EnsemblBacteria" id="CAP14055">
    <property type="protein sequence ID" value="CAP14055"/>
    <property type="gene ID" value="OE_3104F"/>
</dbReference>
<dbReference type="GeneID" id="89349762"/>
<dbReference type="KEGG" id="hsl:OE_3104F"/>
<dbReference type="HOGENOM" id="CLU_209475_0_0_2"/>
<dbReference type="Proteomes" id="UP000001321">
    <property type="component" value="Chromosome"/>
</dbReference>
<dbReference type="GO" id="GO:0008270">
    <property type="term" value="F:zinc ion binding"/>
    <property type="evidence" value="ECO:0007669"/>
    <property type="project" value="UniProtKB-KW"/>
</dbReference>
<dbReference type="InterPro" id="IPR053463">
    <property type="entry name" value="Brz_Regulator"/>
</dbReference>
<dbReference type="NCBIfam" id="NF041795">
    <property type="entry name" value="Brz"/>
    <property type="match status" value="1"/>
</dbReference>
<dbReference type="Pfam" id="PF23454">
    <property type="entry name" value="Zn_ribbon_Brz"/>
    <property type="match status" value="1"/>
</dbReference>
<accession>B0R5N8</accession>
<feature type="chain" id="PRO_0000411893" description="Transcriptional regulator Brz">
    <location>
        <begin position="1"/>
        <end position="60"/>
    </location>
</feature>
<feature type="zinc finger region" description="C4-type; atypical" evidence="1">
    <location>
        <begin position="8"/>
        <end position="52"/>
    </location>
</feature>
<feature type="mutagenesis site" description="Loss of activity." evidence="2">
    <original>C</original>
    <variation>S</variation>
    <location>
        <position position="11"/>
    </location>
</feature>
<feature type="mutagenesis site" description="Loss of activity." evidence="2">
    <original>H</original>
    <variation>F</variation>
    <location>
        <position position="52"/>
    </location>
</feature>
<sequence length="60" mass="6798">MPITDLHCPRCGSDVKMGLPMGATVKSVTAASRQEPTSDTQKVRTVECRNDHEFFVRFEW</sequence>
<reference key="1">
    <citation type="journal article" date="2008" name="Genomics">
        <title>Evolution in the laboratory: the genome of Halobacterium salinarum strain R1 compared to that of strain NRC-1.</title>
        <authorList>
            <person name="Pfeiffer F."/>
            <person name="Schuster S.C."/>
            <person name="Broicher A."/>
            <person name="Falb M."/>
            <person name="Palm P."/>
            <person name="Rodewald K."/>
            <person name="Ruepp A."/>
            <person name="Soppa J."/>
            <person name="Tittor J."/>
            <person name="Oesterhelt D."/>
        </authorList>
    </citation>
    <scope>NUCLEOTIDE SEQUENCE [LARGE SCALE GENOMIC DNA]</scope>
    <source>
        <strain>ATCC 29341 / DSM 671 / R1</strain>
    </source>
</reference>
<reference key="2">
    <citation type="journal article" date="2008" name="Mol. Microbiol.">
        <title>A small protein from the bop-brp intergenic region of Halobacterium salinarum contains a zinc finger motif and regulates bop and crtB1 transcription.</title>
        <authorList>
            <person name="Tarasov V.Y."/>
            <person name="Besir H."/>
            <person name="Schwaiger R."/>
            <person name="Klee K."/>
            <person name="Furtwangler K."/>
            <person name="Pfeiffer F."/>
            <person name="Oesterhelt D."/>
        </authorList>
    </citation>
    <scope>FUNCTION</scope>
    <scope>DISRUPTION PHENOTYPE</scope>
    <scope>MUTAGENESIS OF CYS-11 AND HIS-52</scope>
    <source>
        <strain>ATCC 29341 / DSM 671 / R1</strain>
    </source>
</reference>
<keyword id="KW-0010">Activator</keyword>
<keyword id="KW-0479">Metal-binding</keyword>
<keyword id="KW-0804">Transcription</keyword>
<keyword id="KW-0805">Transcription regulation</keyword>
<keyword id="KW-0862">Zinc</keyword>
<keyword id="KW-0863">Zinc-finger</keyword>
<name>BRZ_HALS3</name>
<gene>
    <name type="primary">brz</name>
    <name type="ordered locus">OE_3104F</name>
</gene>
<comment type="function">
    <text evidence="2">Activates transcription of bacteriorhodopsin (bop) and phytoene synthase (crtB1). May interact with DNA or RNA via the zinc finger motif.</text>
</comment>
<comment type="disruption phenotype">
    <text evidence="2">Mutants show various up-regulated and down-regulated genes, including bop and crtB1.</text>
</comment>
<comment type="similarity">
    <text evidence="3">Belongs to the Brz family.</text>
</comment>